<name>I4E3B_XENLA</name>
<feature type="chain" id="PRO_0000287701" description="Eukaryotic translation initiation factor 4E type 3-B">
    <location>
        <begin position="1"/>
        <end position="218"/>
    </location>
</feature>
<feature type="region of interest" description="Disordered" evidence="2">
    <location>
        <begin position="1"/>
        <end position="23"/>
    </location>
</feature>
<feature type="compositionally biased region" description="Basic and acidic residues" evidence="2">
    <location>
        <begin position="8"/>
        <end position="23"/>
    </location>
</feature>
<feature type="binding site" evidence="1">
    <location>
        <begin position="109"/>
        <end position="110"/>
    </location>
    <ligand>
        <name>mRNA</name>
        <dbReference type="ChEBI" id="CHEBI:33699"/>
    </ligand>
    <ligandPart>
        <name>N(7)-methylguanosine 5'-triphosphate group</name>
        <dbReference type="ChEBI" id="CHEBI:74429"/>
        <note>m7GTP residue in mRNA cap</note>
    </ligandPart>
</feature>
<feature type="binding site" evidence="1">
    <location>
        <begin position="163"/>
        <end position="168"/>
    </location>
    <ligand>
        <name>mRNA</name>
        <dbReference type="ChEBI" id="CHEBI:33699"/>
    </ligand>
    <ligandPart>
        <name>N(7)-methylguanosine 5'-triphosphate group</name>
        <dbReference type="ChEBI" id="CHEBI:74429"/>
        <note>m7GTP residue in mRNA cap</note>
    </ligandPart>
</feature>
<organism>
    <name type="scientific">Xenopus laevis</name>
    <name type="common">African clawed frog</name>
    <dbReference type="NCBI Taxonomy" id="8355"/>
    <lineage>
        <taxon>Eukaryota</taxon>
        <taxon>Metazoa</taxon>
        <taxon>Chordata</taxon>
        <taxon>Craniata</taxon>
        <taxon>Vertebrata</taxon>
        <taxon>Euteleostomi</taxon>
        <taxon>Amphibia</taxon>
        <taxon>Batrachia</taxon>
        <taxon>Anura</taxon>
        <taxon>Pipoidea</taxon>
        <taxon>Pipidae</taxon>
        <taxon>Xenopodinae</taxon>
        <taxon>Xenopus</taxon>
        <taxon>Xenopus</taxon>
    </lineage>
</organism>
<dbReference type="EMBL" id="BC068775">
    <property type="protein sequence ID" value="AAH68775.1"/>
    <property type="molecule type" value="mRNA"/>
</dbReference>
<dbReference type="RefSeq" id="NP_001084675.1">
    <property type="nucleotide sequence ID" value="NM_001091206.1"/>
</dbReference>
<dbReference type="SMR" id="Q6NU27"/>
<dbReference type="BioGRID" id="101057">
    <property type="interactions" value="1"/>
</dbReference>
<dbReference type="DNASU" id="414635"/>
<dbReference type="GeneID" id="414635"/>
<dbReference type="KEGG" id="xla:414635"/>
<dbReference type="AGR" id="Xenbase:XB-GENE-992076"/>
<dbReference type="CTD" id="414635"/>
<dbReference type="Xenbase" id="XB-GENE-992076">
    <property type="gene designation" value="eif4e3.L"/>
</dbReference>
<dbReference type="OrthoDB" id="17977at2759"/>
<dbReference type="Proteomes" id="UP000186698">
    <property type="component" value="Chromosome 4L"/>
</dbReference>
<dbReference type="Bgee" id="414635">
    <property type="expression patterns" value="Expressed in egg cell and 19 other cell types or tissues"/>
</dbReference>
<dbReference type="GO" id="GO:0016281">
    <property type="term" value="C:eukaryotic translation initiation factor 4F complex"/>
    <property type="evidence" value="ECO:0000318"/>
    <property type="project" value="GO_Central"/>
</dbReference>
<dbReference type="GO" id="GO:0000340">
    <property type="term" value="F:RNA 7-methylguanosine cap binding"/>
    <property type="evidence" value="ECO:0000318"/>
    <property type="project" value="GO_Central"/>
</dbReference>
<dbReference type="GO" id="GO:0003743">
    <property type="term" value="F:translation initiation factor activity"/>
    <property type="evidence" value="ECO:0000318"/>
    <property type="project" value="GO_Central"/>
</dbReference>
<dbReference type="GO" id="GO:0006417">
    <property type="term" value="P:regulation of translation"/>
    <property type="evidence" value="ECO:0007669"/>
    <property type="project" value="UniProtKB-KW"/>
</dbReference>
<dbReference type="GO" id="GO:0006413">
    <property type="term" value="P:translational initiation"/>
    <property type="evidence" value="ECO:0000318"/>
    <property type="project" value="GO_Central"/>
</dbReference>
<dbReference type="FunFam" id="3.30.760.10:FF:000007">
    <property type="entry name" value="Eukaryotic translation initiation factor 4E family member 3"/>
    <property type="match status" value="1"/>
</dbReference>
<dbReference type="Gene3D" id="3.30.760.10">
    <property type="entry name" value="RNA Cap, Translation Initiation Factor Eif4e"/>
    <property type="match status" value="1"/>
</dbReference>
<dbReference type="InterPro" id="IPR023398">
    <property type="entry name" value="TIF_eIF4e-like"/>
</dbReference>
<dbReference type="InterPro" id="IPR001040">
    <property type="entry name" value="TIF_eIF_4E"/>
</dbReference>
<dbReference type="PANTHER" id="PTHR11960">
    <property type="entry name" value="EUKARYOTIC TRANSLATION INITIATION FACTOR 4E RELATED"/>
    <property type="match status" value="1"/>
</dbReference>
<dbReference type="PANTHER" id="PTHR11960:SF66">
    <property type="entry name" value="EUKARYOTIC TRANSLATION INITIATION FACTOR 4E TYPE 3"/>
    <property type="match status" value="1"/>
</dbReference>
<dbReference type="Pfam" id="PF01652">
    <property type="entry name" value="IF4E"/>
    <property type="match status" value="1"/>
</dbReference>
<dbReference type="SUPFAM" id="SSF55418">
    <property type="entry name" value="eIF4e-like"/>
    <property type="match status" value="1"/>
</dbReference>
<protein>
    <recommendedName>
        <fullName>Eukaryotic translation initiation factor 4E type 3-B</fullName>
        <shortName>eIF-4E type 3-B</shortName>
        <shortName>eIF-4E3-B</shortName>
        <shortName>eIF4E type 3-B</shortName>
        <shortName>eIF4E-3-B</shortName>
    </recommendedName>
</protein>
<gene>
    <name type="primary">eif4e3-b</name>
</gene>
<reference key="1">
    <citation type="submission" date="2004-04" db="EMBL/GenBank/DDBJ databases">
        <authorList>
            <consortium name="NIH - Xenopus Gene Collection (XGC) project"/>
        </authorList>
    </citation>
    <scope>NUCLEOTIDE SEQUENCE [LARGE SCALE MRNA]</scope>
    <source>
        <tissue>Embryo</tissue>
    </source>
</reference>
<evidence type="ECO:0000250" key="1"/>
<evidence type="ECO:0000256" key="2">
    <source>
        <dbReference type="SAM" id="MobiDB-lite"/>
    </source>
</evidence>
<evidence type="ECO:0000305" key="3"/>
<proteinExistence type="evidence at transcript level"/>
<comment type="function">
    <text evidence="1">Recognizes and binds the 7-methylguanosine-containing mRNA cap during an early step in the initiation of protein synthesis.</text>
</comment>
<comment type="subunit">
    <text evidence="1">eIF4F is a multi-subunit complex, the composition of which varies with external and internal environmental conditions. It is composed of at least eIF4A, eIF4E and eIF4G (By similarity).</text>
</comment>
<comment type="similarity">
    <text evidence="3">Belongs to the eukaryotic initiation factor 4E family.</text>
</comment>
<sequence>MALPVAPADRRLQPEPDEQVHLNHRELGELDLPQEPDTEGIPLNSPWTFWLDRSLPGTTAAECESNLKKIYTVHTIQSFWSVYNNIPLVSNLPLRWSYHLMRGERKPLWEEESNAKGGVWKMKVPKEASSLVWKELLLATIGEQFTDHCSPEDEVIGVSVSVRDREDVVQVWNGNASVVGEAKVLEKIYELLPNTSFKAVFYKPHEEHHAFEGGRSRH</sequence>
<accession>Q6NU27</accession>
<keyword id="KW-0396">Initiation factor</keyword>
<keyword id="KW-0648">Protein biosynthesis</keyword>
<keyword id="KW-1185">Reference proteome</keyword>
<keyword id="KW-0694">RNA-binding</keyword>
<keyword id="KW-0810">Translation regulation</keyword>